<evidence type="ECO:0000250" key="1"/>
<evidence type="ECO:0000250" key="2">
    <source>
        <dbReference type="UniProtKB" id="P31723"/>
    </source>
</evidence>
<evidence type="ECO:0000250" key="3">
    <source>
        <dbReference type="UniProtKB" id="P32906"/>
    </source>
</evidence>
<evidence type="ECO:0000250" key="4">
    <source>
        <dbReference type="UniProtKB" id="Q2ULB2"/>
    </source>
</evidence>
<evidence type="ECO:0000255" key="5"/>
<evidence type="ECO:0000305" key="6"/>
<gene>
    <name type="primary">mns1B</name>
    <name type="synonym">msdS</name>
    <name type="ORF">AFUB_014090</name>
</gene>
<accession>B0XMT4</accession>
<name>MNS1B_ASPFC</name>
<comment type="function">
    <text evidence="1">Involved in the maturation of Asn-linked oligosaccharides. Progressively trims alpha-1,2-linked mannose residues from Man(9)GlcNAc(2) to produce Man(5)GlcNAc(2) (By similarity).</text>
</comment>
<comment type="catalytic activity">
    <reaction evidence="3">
        <text>N(4)-(alpha-D-Man-(1-&gt;2)-alpha-D-Man-(1-&gt;2)-alpha-D-Man-(1-&gt;3)-[alpha-D-Man-(1-&gt;2)-alpha-D-Man-(1-&gt;3)-[alpha-D-Man-(1-&gt;2)-alpha-D-Man-(1-&gt;6)]-alpha-D-Man-(1-&gt;6)]-beta-D-Man-(1-&gt;4)-beta-D-GlcNAc-(1-&gt;4)-beta-D-GlcNAc)-L-asparaginyl-[protein] (N-glucan mannose isomer 9A1,2,3B1,2,3) + 4 H2O = N(4)-(alpha-D-Man-(1-&gt;3)-[alpha-D-Man-(1-&gt;3)-[alpha-D-Man-(1-&gt;6)]-alpha-D-Man-(1-&gt;6)]-beta-D-Man-(1-&gt;4)-beta-D-GlcNAc-(1-&gt;4)-beta-D-GlcNAc)-L-asparaginyl-[protein] (N-glucan mannose isomer 5A1,2) + 4 beta-D-mannose</text>
        <dbReference type="Rhea" id="RHEA:56008"/>
        <dbReference type="Rhea" id="RHEA-COMP:14356"/>
        <dbReference type="Rhea" id="RHEA-COMP:14367"/>
        <dbReference type="ChEBI" id="CHEBI:15377"/>
        <dbReference type="ChEBI" id="CHEBI:28563"/>
        <dbReference type="ChEBI" id="CHEBI:59087"/>
        <dbReference type="ChEBI" id="CHEBI:139493"/>
        <dbReference type="EC" id="3.2.1.113"/>
    </reaction>
</comment>
<comment type="catalytic activity">
    <reaction evidence="3">
        <text>N(4)-(alpha-D-Man-(1-&gt;2)-alpha-D-Man-(1-&gt;2)-alpha-D-Man-(1-&gt;3)-[alpha-D-Man-(1-&gt;3)-[alpha-D-Man-(1-&gt;2)-alpha-D-Man-(1-&gt;6)]-alpha-D-Man-(1-&gt;6)]-beta-D-Man-(1-&gt;4)-beta-D-GlcNAc-(1-&gt;4)-beta-D-GlcNAc)-L-asparaginyl-[protein] (N-glucan mannose isomer 8A1,2,3B1,3) + 3 H2O = N(4)-(alpha-D-Man-(1-&gt;3)-[alpha-D-Man-(1-&gt;3)-[alpha-D-Man-(1-&gt;6)]-alpha-D-Man-(1-&gt;6)]-beta-D-Man-(1-&gt;4)-beta-D-GlcNAc-(1-&gt;4)-beta-D-GlcNAc)-L-asparaginyl-[protein] (N-glucan mannose isomer 5A1,2) + 3 beta-D-mannose</text>
        <dbReference type="Rhea" id="RHEA:56028"/>
        <dbReference type="Rhea" id="RHEA-COMP:14358"/>
        <dbReference type="Rhea" id="RHEA-COMP:14367"/>
        <dbReference type="ChEBI" id="CHEBI:15377"/>
        <dbReference type="ChEBI" id="CHEBI:28563"/>
        <dbReference type="ChEBI" id="CHEBI:59087"/>
        <dbReference type="ChEBI" id="CHEBI:60628"/>
        <dbReference type="EC" id="3.2.1.113"/>
    </reaction>
</comment>
<comment type="cofactor">
    <cofactor evidence="4">
        <name>Ca(2+)</name>
        <dbReference type="ChEBI" id="CHEBI:29108"/>
    </cofactor>
    <cofactor evidence="4">
        <name>Mg(2+)</name>
        <dbReference type="ChEBI" id="CHEBI:18420"/>
    </cofactor>
    <text evidence="4">Ca(2+). Can also use Mg(2+), but with lower efficiency.</text>
</comment>
<comment type="pathway">
    <text evidence="3">Protein modification; protein glycosylation.</text>
</comment>
<comment type="subunit">
    <text evidence="1">Monomer.</text>
</comment>
<comment type="subcellular location">
    <subcellularLocation>
        <location evidence="1">Cytoplasmic vesicle lumen</location>
    </subcellularLocation>
</comment>
<comment type="similarity">
    <text evidence="6">Belongs to the glycosyl hydrolase 47 family.</text>
</comment>
<proteinExistence type="inferred from homology"/>
<protein>
    <recommendedName>
        <fullName>Probable mannosyl-oligosaccharide alpha-1,2-mannosidase 1B</fullName>
        <ecNumber evidence="3">3.2.1.113</ecNumber>
    </recommendedName>
    <alternativeName>
        <fullName>Class I alpha-mannosidase 1B</fullName>
    </alternativeName>
    <alternativeName>
        <fullName>Man(9)-alpha-mannosidase 1B</fullName>
    </alternativeName>
</protein>
<dbReference type="EC" id="3.2.1.113" evidence="3"/>
<dbReference type="EMBL" id="DS499594">
    <property type="protein sequence ID" value="EDP56691.1"/>
    <property type="molecule type" value="Genomic_DNA"/>
</dbReference>
<dbReference type="SMR" id="B0XMT4"/>
<dbReference type="Allergome" id="8990">
    <property type="allergen name" value="Asp f Mannosidase"/>
</dbReference>
<dbReference type="GlyCosmos" id="B0XMT4">
    <property type="glycosylation" value="3 sites, No reported glycans"/>
</dbReference>
<dbReference type="EnsemblFungi" id="EDP56691">
    <property type="protein sequence ID" value="EDP56691"/>
    <property type="gene ID" value="AFUB_014090"/>
</dbReference>
<dbReference type="VEuPathDB" id="FungiDB:AFUB_014090"/>
<dbReference type="HOGENOM" id="CLU_003818_0_2_1"/>
<dbReference type="OrthoDB" id="25603at5052"/>
<dbReference type="PhylomeDB" id="B0XMT4"/>
<dbReference type="UniPathway" id="UPA00378"/>
<dbReference type="Proteomes" id="UP000001699">
    <property type="component" value="Unassembled WGS sequence"/>
</dbReference>
<dbReference type="GO" id="GO:0060205">
    <property type="term" value="C:cytoplasmic vesicle lumen"/>
    <property type="evidence" value="ECO:0007669"/>
    <property type="project" value="UniProtKB-SubCell"/>
</dbReference>
<dbReference type="GO" id="GO:0005783">
    <property type="term" value="C:endoplasmic reticulum"/>
    <property type="evidence" value="ECO:0007669"/>
    <property type="project" value="TreeGrafter"/>
</dbReference>
<dbReference type="GO" id="GO:0016020">
    <property type="term" value="C:membrane"/>
    <property type="evidence" value="ECO:0007669"/>
    <property type="project" value="InterPro"/>
</dbReference>
<dbReference type="GO" id="GO:0005509">
    <property type="term" value="F:calcium ion binding"/>
    <property type="evidence" value="ECO:0007669"/>
    <property type="project" value="InterPro"/>
</dbReference>
<dbReference type="GO" id="GO:0004571">
    <property type="term" value="F:mannosyl-oligosaccharide 1,2-alpha-mannosidase activity"/>
    <property type="evidence" value="ECO:0007669"/>
    <property type="project" value="UniProtKB-EC"/>
</dbReference>
<dbReference type="GO" id="GO:0005975">
    <property type="term" value="P:carbohydrate metabolic process"/>
    <property type="evidence" value="ECO:0007669"/>
    <property type="project" value="InterPro"/>
</dbReference>
<dbReference type="GO" id="GO:0036503">
    <property type="term" value="P:ERAD pathway"/>
    <property type="evidence" value="ECO:0007669"/>
    <property type="project" value="UniProtKB-ARBA"/>
</dbReference>
<dbReference type="GO" id="GO:0006486">
    <property type="term" value="P:protein glycosylation"/>
    <property type="evidence" value="ECO:0007669"/>
    <property type="project" value="UniProtKB-UniPathway"/>
</dbReference>
<dbReference type="FunFam" id="1.50.10.10:FF:000047">
    <property type="entry name" value="Mannosyl-oligosaccharide alpha-1,2-mannosidase"/>
    <property type="match status" value="1"/>
</dbReference>
<dbReference type="Gene3D" id="1.50.10.10">
    <property type="match status" value="1"/>
</dbReference>
<dbReference type="InterPro" id="IPR012341">
    <property type="entry name" value="6hp_glycosidase-like_sf"/>
</dbReference>
<dbReference type="InterPro" id="IPR001382">
    <property type="entry name" value="Glyco_hydro_47"/>
</dbReference>
<dbReference type="InterPro" id="IPR050749">
    <property type="entry name" value="Glycosyl_Hydrolase_47"/>
</dbReference>
<dbReference type="InterPro" id="IPR036026">
    <property type="entry name" value="Seven-hairpin_glycosidases"/>
</dbReference>
<dbReference type="PANTHER" id="PTHR11742:SF101">
    <property type="entry name" value="MANNOSYL-OLIGOSACCHARIDE ALPHA-1,2-MANNOSIDASE 1B"/>
    <property type="match status" value="1"/>
</dbReference>
<dbReference type="PANTHER" id="PTHR11742">
    <property type="entry name" value="MANNOSYL-OLIGOSACCHARIDE ALPHA-1,2-MANNOSIDASE-RELATED"/>
    <property type="match status" value="1"/>
</dbReference>
<dbReference type="Pfam" id="PF01532">
    <property type="entry name" value="Glyco_hydro_47"/>
    <property type="match status" value="1"/>
</dbReference>
<dbReference type="PRINTS" id="PR00747">
    <property type="entry name" value="GLYHDRLASE47"/>
</dbReference>
<dbReference type="SUPFAM" id="SSF48225">
    <property type="entry name" value="Seven-hairpin glycosidases"/>
    <property type="match status" value="1"/>
</dbReference>
<sequence>MHLPSLSVALALVSSSLALPQAVLPENDVSSRAAAVKEAFSHAWDGYMKYAFPHDELLPVSNSYGDSRNGWGASAVDALSTAIVMRNATIVSQILDHIAKIDYSKTSDMVSLFETTIRYLGGMLSGYDLLKGPAADLVEDRTKVDMLLQQSKNLGDVLKFAFDTPSGVPYNNINITSHGNDGATTNGLAVTGTLVLEWTRLSDLTGDQEYAKLSQRAESYLLAPQPSSGEPFPGLVGSAISIQTGQFTNGFVSWNGGSDSFYEYLMKMYVYDPKRFATYKDRWVAAAESSIDHLASNPASRPDLTFLATYNKGSLGLSSQHLACFDGGSYLLGGTVLDRADLIDFGLKLVDGCAETYHQTLTGIGPESFGWDEKSVPADQKELYERAGFYVQSGAYILRPEVIESFYYAYRVTGKKQYRDWVWNAFENINKYCRTESGFAGLTNVNAVNGGGRYDNQESFLFAEVMKYAYLTHAPGMSSMPAAAEDKANKSRG</sequence>
<feature type="signal peptide" evidence="5">
    <location>
        <begin position="1"/>
        <end position="18"/>
    </location>
</feature>
<feature type="chain" id="PRO_0000394817" description="Probable mannosyl-oligosaccharide alpha-1,2-mannosidase 1B">
    <location>
        <begin position="19"/>
        <end position="493"/>
    </location>
</feature>
<feature type="active site" description="Proton donor" evidence="2">
    <location>
        <position position="367"/>
    </location>
</feature>
<feature type="glycosylation site" description="N-linked (GlcNAc...) asparagine" evidence="5">
    <location>
        <position position="87"/>
    </location>
</feature>
<feature type="glycosylation site" description="N-linked (GlcNAc...) asparagine" evidence="5">
    <location>
        <position position="174"/>
    </location>
</feature>
<feature type="glycosylation site" description="N-linked (GlcNAc...) asparagine" evidence="5">
    <location>
        <position position="489"/>
    </location>
</feature>
<feature type="disulfide bond" evidence="3">
    <location>
        <begin position="324"/>
        <end position="353"/>
    </location>
</feature>
<keyword id="KW-0119">Carbohydrate metabolism</keyword>
<keyword id="KW-0968">Cytoplasmic vesicle</keyword>
<keyword id="KW-1015">Disulfide bond</keyword>
<keyword id="KW-0325">Glycoprotein</keyword>
<keyword id="KW-0326">Glycosidase</keyword>
<keyword id="KW-0378">Hydrolase</keyword>
<keyword id="KW-0732">Signal</keyword>
<reference key="1">
    <citation type="journal article" date="2008" name="PLoS Genet.">
        <title>Genomic islands in the pathogenic filamentous fungus Aspergillus fumigatus.</title>
        <authorList>
            <person name="Fedorova N.D."/>
            <person name="Khaldi N."/>
            <person name="Joardar V.S."/>
            <person name="Maiti R."/>
            <person name="Amedeo P."/>
            <person name="Anderson M.J."/>
            <person name="Crabtree J."/>
            <person name="Silva J.C."/>
            <person name="Badger J.H."/>
            <person name="Albarraq A."/>
            <person name="Angiuoli S."/>
            <person name="Bussey H."/>
            <person name="Bowyer P."/>
            <person name="Cotty P.J."/>
            <person name="Dyer P.S."/>
            <person name="Egan A."/>
            <person name="Galens K."/>
            <person name="Fraser-Liggett C.M."/>
            <person name="Haas B.J."/>
            <person name="Inman J.M."/>
            <person name="Kent R."/>
            <person name="Lemieux S."/>
            <person name="Malavazi I."/>
            <person name="Orvis J."/>
            <person name="Roemer T."/>
            <person name="Ronning C.M."/>
            <person name="Sundaram J.P."/>
            <person name="Sutton G."/>
            <person name="Turner G."/>
            <person name="Venter J.C."/>
            <person name="White O.R."/>
            <person name="Whitty B.R."/>
            <person name="Youngman P."/>
            <person name="Wolfe K.H."/>
            <person name="Goldman G.H."/>
            <person name="Wortman J.R."/>
            <person name="Jiang B."/>
            <person name="Denning D.W."/>
            <person name="Nierman W.C."/>
        </authorList>
    </citation>
    <scope>NUCLEOTIDE SEQUENCE [LARGE SCALE GENOMIC DNA]</scope>
    <source>
        <strain>CBS 144.89 / FGSC A1163 / CEA10</strain>
    </source>
</reference>
<organism>
    <name type="scientific">Aspergillus fumigatus (strain CBS 144.89 / FGSC A1163 / CEA10)</name>
    <name type="common">Neosartorya fumigata</name>
    <dbReference type="NCBI Taxonomy" id="451804"/>
    <lineage>
        <taxon>Eukaryota</taxon>
        <taxon>Fungi</taxon>
        <taxon>Dikarya</taxon>
        <taxon>Ascomycota</taxon>
        <taxon>Pezizomycotina</taxon>
        <taxon>Eurotiomycetes</taxon>
        <taxon>Eurotiomycetidae</taxon>
        <taxon>Eurotiales</taxon>
        <taxon>Aspergillaceae</taxon>
        <taxon>Aspergillus</taxon>
        <taxon>Aspergillus subgen. Fumigati</taxon>
    </lineage>
</organism>